<organism>
    <name type="scientific">Rhodobacter capsulatus</name>
    <name type="common">Rhodopseudomonas capsulata</name>
    <dbReference type="NCBI Taxonomy" id="1061"/>
    <lineage>
        <taxon>Bacteria</taxon>
        <taxon>Pseudomonadati</taxon>
        <taxon>Pseudomonadota</taxon>
        <taxon>Alphaproteobacteria</taxon>
        <taxon>Rhodobacterales</taxon>
        <taxon>Rhodobacter group</taxon>
        <taxon>Rhodobacter</taxon>
    </lineage>
</organism>
<feature type="chain" id="PRO_0000118578" description="NADH-quinone oxidoreductase subunit F">
    <location>
        <begin position="1"/>
        <end position="431"/>
    </location>
</feature>
<feature type="binding site" evidence="1">
    <location>
        <begin position="54"/>
        <end position="63"/>
    </location>
    <ligand>
        <name>NAD(+)</name>
        <dbReference type="ChEBI" id="CHEBI:57540"/>
    </ligand>
</feature>
<feature type="binding site" evidence="1">
    <location>
        <begin position="167"/>
        <end position="214"/>
    </location>
    <ligand>
        <name>FMN</name>
        <dbReference type="ChEBI" id="CHEBI:58210"/>
    </ligand>
</feature>
<feature type="binding site" evidence="2">
    <location>
        <position position="346"/>
    </location>
    <ligand>
        <name>[4Fe-4S] cluster</name>
        <dbReference type="ChEBI" id="CHEBI:49883"/>
    </ligand>
</feature>
<feature type="binding site" evidence="2">
    <location>
        <position position="349"/>
    </location>
    <ligand>
        <name>[4Fe-4S] cluster</name>
        <dbReference type="ChEBI" id="CHEBI:49883"/>
    </ligand>
</feature>
<feature type="binding site" evidence="2">
    <location>
        <position position="352"/>
    </location>
    <ligand>
        <name>[4Fe-4S] cluster</name>
        <dbReference type="ChEBI" id="CHEBI:49883"/>
    </ligand>
</feature>
<feature type="binding site" evidence="2">
    <location>
        <position position="392"/>
    </location>
    <ligand>
        <name>[4Fe-4S] cluster</name>
        <dbReference type="ChEBI" id="CHEBI:49883"/>
    </ligand>
</feature>
<name>NUOF_RHOCA</name>
<protein>
    <recommendedName>
        <fullName>NADH-quinone oxidoreductase subunit F</fullName>
        <ecNumber>7.1.1.-</ecNumber>
    </recommendedName>
    <alternativeName>
        <fullName>NADH dehydrogenase I subunit F</fullName>
    </alternativeName>
    <alternativeName>
        <fullName>NDH-1 subunit F</fullName>
    </alternativeName>
</protein>
<dbReference type="EC" id="7.1.1.-"/>
<dbReference type="EMBL" id="Y10142">
    <property type="protein sequence ID" value="CAA71232.1"/>
    <property type="molecule type" value="Genomic_DNA"/>
</dbReference>
<dbReference type="EMBL" id="Y09884">
    <property type="protein sequence ID" value="CAA71013.1"/>
    <property type="molecule type" value="Genomic_DNA"/>
</dbReference>
<dbReference type="EMBL" id="AF029365">
    <property type="protein sequence ID" value="AAC24991.1"/>
    <property type="molecule type" value="Genomic_DNA"/>
</dbReference>
<dbReference type="RefSeq" id="WP_013067247.1">
    <property type="nucleotide sequence ID" value="NZ_VIBE01000008.1"/>
</dbReference>
<dbReference type="SMR" id="O07948"/>
<dbReference type="GeneID" id="31490403"/>
<dbReference type="OMA" id="QGDGKPH"/>
<dbReference type="GO" id="GO:0051539">
    <property type="term" value="F:4 iron, 4 sulfur cluster binding"/>
    <property type="evidence" value="ECO:0007669"/>
    <property type="project" value="UniProtKB-KW"/>
</dbReference>
<dbReference type="GO" id="GO:0010181">
    <property type="term" value="F:FMN binding"/>
    <property type="evidence" value="ECO:0007669"/>
    <property type="project" value="InterPro"/>
</dbReference>
<dbReference type="GO" id="GO:0046872">
    <property type="term" value="F:metal ion binding"/>
    <property type="evidence" value="ECO:0007669"/>
    <property type="project" value="UniProtKB-KW"/>
</dbReference>
<dbReference type="GO" id="GO:0051287">
    <property type="term" value="F:NAD binding"/>
    <property type="evidence" value="ECO:0007669"/>
    <property type="project" value="InterPro"/>
</dbReference>
<dbReference type="GO" id="GO:0008137">
    <property type="term" value="F:NADH dehydrogenase (ubiquinone) activity"/>
    <property type="evidence" value="ECO:0007669"/>
    <property type="project" value="InterPro"/>
</dbReference>
<dbReference type="GO" id="GO:0048038">
    <property type="term" value="F:quinone binding"/>
    <property type="evidence" value="ECO:0007669"/>
    <property type="project" value="UniProtKB-KW"/>
</dbReference>
<dbReference type="FunFam" id="1.20.1440.230:FF:000001">
    <property type="entry name" value="Mitochondrial NADH dehydrogenase flavoprotein 1"/>
    <property type="match status" value="1"/>
</dbReference>
<dbReference type="FunFam" id="3.10.20.600:FF:000001">
    <property type="entry name" value="NADH dehydrogenase [ubiquinone] flavoprotein 1, mitochondrial"/>
    <property type="match status" value="1"/>
</dbReference>
<dbReference type="FunFam" id="3.40.50.11540:FF:000001">
    <property type="entry name" value="NADH dehydrogenase [ubiquinone] flavoprotein 1, mitochondrial"/>
    <property type="match status" value="1"/>
</dbReference>
<dbReference type="Gene3D" id="3.10.20.600">
    <property type="match status" value="1"/>
</dbReference>
<dbReference type="Gene3D" id="3.40.50.11540">
    <property type="entry name" value="NADH-ubiquinone oxidoreductase 51kDa subunit"/>
    <property type="match status" value="1"/>
</dbReference>
<dbReference type="Gene3D" id="1.20.1440.230">
    <property type="entry name" value="NADH-ubiquinone oxidoreductase 51kDa subunit, iron-sulphur binding domain"/>
    <property type="match status" value="1"/>
</dbReference>
<dbReference type="InterPro" id="IPR050837">
    <property type="entry name" value="ComplexI_51kDa_subunit"/>
</dbReference>
<dbReference type="InterPro" id="IPR001949">
    <property type="entry name" value="NADH-UbQ_OxRdtase_51kDa_CS"/>
</dbReference>
<dbReference type="InterPro" id="IPR011537">
    <property type="entry name" value="NADH-UbQ_OxRdtase_suF"/>
</dbReference>
<dbReference type="InterPro" id="IPR011538">
    <property type="entry name" value="Nuo51_FMN-bd"/>
</dbReference>
<dbReference type="InterPro" id="IPR037225">
    <property type="entry name" value="Nuo51_FMN-bd_sf"/>
</dbReference>
<dbReference type="InterPro" id="IPR019575">
    <property type="entry name" value="Nuop51_4Fe4S-bd"/>
</dbReference>
<dbReference type="InterPro" id="IPR037207">
    <property type="entry name" value="Nuop51_4Fe4S-bd_sf"/>
</dbReference>
<dbReference type="InterPro" id="IPR054765">
    <property type="entry name" value="SLBB_dom"/>
</dbReference>
<dbReference type="NCBIfam" id="TIGR01959">
    <property type="entry name" value="nuoF_fam"/>
    <property type="match status" value="1"/>
</dbReference>
<dbReference type="NCBIfam" id="NF010120">
    <property type="entry name" value="PRK13596.1"/>
    <property type="match status" value="1"/>
</dbReference>
<dbReference type="PANTHER" id="PTHR11780:SF10">
    <property type="entry name" value="NADH DEHYDROGENASE [UBIQUINONE] FLAVOPROTEIN 1, MITOCHONDRIAL"/>
    <property type="match status" value="1"/>
</dbReference>
<dbReference type="PANTHER" id="PTHR11780">
    <property type="entry name" value="NADH-UBIQUINONE OXIDOREDUCTASE FLAVOPROTEIN 1 NDUFV1"/>
    <property type="match status" value="1"/>
</dbReference>
<dbReference type="Pfam" id="PF01512">
    <property type="entry name" value="Complex1_51K"/>
    <property type="match status" value="1"/>
</dbReference>
<dbReference type="Pfam" id="PF10589">
    <property type="entry name" value="NADH_4Fe-4S"/>
    <property type="match status" value="1"/>
</dbReference>
<dbReference type="Pfam" id="PF22461">
    <property type="entry name" value="SLBB_2"/>
    <property type="match status" value="1"/>
</dbReference>
<dbReference type="SMART" id="SM00928">
    <property type="entry name" value="NADH_4Fe-4S"/>
    <property type="match status" value="1"/>
</dbReference>
<dbReference type="SUPFAM" id="SSF142019">
    <property type="entry name" value="Nqo1 FMN-binding domain-like"/>
    <property type="match status" value="1"/>
</dbReference>
<dbReference type="SUPFAM" id="SSF142984">
    <property type="entry name" value="Nqo1 middle domain-like"/>
    <property type="match status" value="1"/>
</dbReference>
<dbReference type="SUPFAM" id="SSF140490">
    <property type="entry name" value="Nqo1C-terminal domain-like"/>
    <property type="match status" value="1"/>
</dbReference>
<dbReference type="PROSITE" id="PS00644">
    <property type="entry name" value="COMPLEX1_51K_1"/>
    <property type="match status" value="1"/>
</dbReference>
<dbReference type="PROSITE" id="PS00645">
    <property type="entry name" value="COMPLEX1_51K_2"/>
    <property type="match status" value="1"/>
</dbReference>
<comment type="function">
    <text>NDH-1 shuttles electrons from NADH, via FMN and iron-sulfur (Fe-S) centers, to quinones in the respiratory chain. The immediate electron acceptor for the enzyme in this species is believed to be ubiquinone. Couples the redox reaction to proton translocation (for every two electrons transferred, four hydrogen ions are translocated across the cytoplasmic membrane), and thus conserves the redox energy in a proton gradient.</text>
</comment>
<comment type="catalytic activity">
    <reaction>
        <text>a quinone + NADH + 5 H(+)(in) = a quinol + NAD(+) + 4 H(+)(out)</text>
        <dbReference type="Rhea" id="RHEA:57888"/>
        <dbReference type="ChEBI" id="CHEBI:15378"/>
        <dbReference type="ChEBI" id="CHEBI:24646"/>
        <dbReference type="ChEBI" id="CHEBI:57540"/>
        <dbReference type="ChEBI" id="CHEBI:57945"/>
        <dbReference type="ChEBI" id="CHEBI:132124"/>
    </reaction>
</comment>
<comment type="cofactor">
    <cofactor evidence="3">
        <name>FMN</name>
        <dbReference type="ChEBI" id="CHEBI:58210"/>
    </cofactor>
    <text evidence="3">Binds 1 FMN.</text>
</comment>
<comment type="cofactor">
    <cofactor evidence="3">
        <name>[4Fe-4S] cluster</name>
        <dbReference type="ChEBI" id="CHEBI:49883"/>
    </cofactor>
    <text evidence="3">Binds 1 [4Fe-4S] cluster.</text>
</comment>
<comment type="similarity">
    <text evidence="3">Belongs to the complex I 51 kDa subunit family.</text>
</comment>
<proteinExistence type="inferred from homology"/>
<reference key="1">
    <citation type="journal article" date="1997" name="FEBS Lett.">
        <title>Immuno-purification of a dimeric subcomplex of the respiratory NADH-CoQ reductase of Rhodobacter capsulatus equivalent to the FP fraction of the mitochondrial complex I.</title>
        <authorList>
            <person name="Duborjal H."/>
            <person name="Dupuis A."/>
            <person name="Chapel A."/>
            <person name="Kieffer S."/>
            <person name="Lunardi J."/>
            <person name="Issartel J.P."/>
        </authorList>
    </citation>
    <scope>NUCLEOTIDE SEQUENCE [GENOMIC DNA]</scope>
    <source>
        <strain>ATCC 33303 / B10</strain>
    </source>
</reference>
<reference key="2">
    <citation type="submission" date="1997-06" db="EMBL/GenBank/DDBJ databases">
        <title>The NADH-binding fragment of the NADH:ubiquinone oxidoreductase from Rhodobacter capsulatus: proteins and gene structure.</title>
        <authorList>
            <person name="Herter S.M."/>
            <person name="Schiltz E."/>
            <person name="Drews G."/>
        </authorList>
    </citation>
    <scope>NUCLEOTIDE SEQUENCE [GENOMIC DNA]</scope>
</reference>
<keyword id="KW-0004">4Fe-4S</keyword>
<keyword id="KW-0285">Flavoprotein</keyword>
<keyword id="KW-0288">FMN</keyword>
<keyword id="KW-0408">Iron</keyword>
<keyword id="KW-0411">Iron-sulfur</keyword>
<keyword id="KW-0479">Metal-binding</keyword>
<keyword id="KW-0520">NAD</keyword>
<keyword id="KW-0874">Quinone</keyword>
<keyword id="KW-1278">Translocase</keyword>
<keyword id="KW-0830">Ubiquinone</keyword>
<gene>
    <name type="primary">nuoF</name>
</gene>
<evidence type="ECO:0000250" key="1"/>
<evidence type="ECO:0000255" key="2"/>
<evidence type="ECO:0000305" key="3"/>
<accession>O07948</accession>
<sequence>MLNDHDRIFTNIYGMHDRSLKGAMARGHWDGTAAILGNGRDWIIEQVKASGLRGRGGAGFPTGLKWSFMPKQSDGRPSFLVINADESEPGTCKDREIMRHDPHTLIEGALIAGFAMGARAAYIYIRGEYVREKEALQAAIDECYEAGLIGKNACRSDYDFDVYLHHGAGAYICGEETALLESLEGKKGMPRMKPPFPAGSGLYGCPTTVNNVESIAVVPTILRRGGAWFAGIGRPNNTGVKLFAMSGHVNTPCVVEEAMSISMKELIEKHGGGVRGGWKNLKAVIPGGASCPVIPAHLCEDAIMDYDGMREKQSSFGTACLIVMDQQTDIIKAIARLSKFFKHESCGQCTPCREGTSWMWRVMERLVTGEAEVEEIDMLFSVTKQVEGHTICALGDAAAWPIQGLIRHYREEIEDRIKARKTGRMGAMAAE</sequence>